<gene>
    <name type="primary">PLEKHA8</name>
    <name type="synonym">FAPP2</name>
</gene>
<evidence type="ECO:0000250" key="1"/>
<evidence type="ECO:0000250" key="2">
    <source>
        <dbReference type="UniProtKB" id="D3ZY60"/>
    </source>
</evidence>
<evidence type="ECO:0000250" key="3">
    <source>
        <dbReference type="UniProtKB" id="Q96JA3"/>
    </source>
</evidence>
<evidence type="ECO:0000255" key="4">
    <source>
        <dbReference type="PROSITE-ProRule" id="PRU00145"/>
    </source>
</evidence>
<evidence type="ECO:0000256" key="5">
    <source>
        <dbReference type="SAM" id="MobiDB-lite"/>
    </source>
</evidence>
<evidence type="ECO:0000269" key="6">
    <source>
    </source>
</evidence>
<evidence type="ECO:0000269" key="7">
    <source>
    </source>
</evidence>
<evidence type="ECO:0000269" key="8">
    <source>
    </source>
</evidence>
<evidence type="ECO:0000305" key="9"/>
<name>PKHA8_CANLF</name>
<organism>
    <name type="scientific">Canis lupus familiaris</name>
    <name type="common">Dog</name>
    <name type="synonym">Canis familiaris</name>
    <dbReference type="NCBI Taxonomy" id="9615"/>
    <lineage>
        <taxon>Eukaryota</taxon>
        <taxon>Metazoa</taxon>
        <taxon>Chordata</taxon>
        <taxon>Craniata</taxon>
        <taxon>Vertebrata</taxon>
        <taxon>Euteleostomi</taxon>
        <taxon>Mammalia</taxon>
        <taxon>Eutheria</taxon>
        <taxon>Laurasiatheria</taxon>
        <taxon>Carnivora</taxon>
        <taxon>Caniformia</taxon>
        <taxon>Canidae</taxon>
        <taxon>Canis</taxon>
    </lineage>
</organism>
<comment type="function">
    <text evidence="6 7 8">Cargo transport protein that is required for apical transport from the trans-Golgi network (TGN). Transports AQP2 from the trans-Golgi network (TGN) to sites of AQP2 phosphorylation. Mediates the non-vesicular transport of glucosylceramide (GlcCer) from the trans-Golgi network (TGN) to the plasma membrane and plays a pivotal role in the synthesis of complex glycosphingolipids. Binding of both phosphatidylinositol 4-phosphate (PIP) and ARF1 are essential for the GlcCer transfer ability. Also required for primary cilium formation, possibly by being involved in the transport of raft lipids to the apical membrane, and for membrane tubulation.</text>
</comment>
<comment type="subunit">
    <text evidence="1">Homodimer. Interacts with ARF1; the interaction together with phosphatidylinositol 4-phosphate binding is required for FAPP2 GlcCer transfer ability (By similarity).</text>
</comment>
<comment type="interaction">
    <interactant intactId="EBI-15817088">
        <id>D2KC46</id>
    </interactant>
    <interactant intactId="EBI-15817088">
        <id>D2KC46</id>
        <label>PLEKHA8</label>
    </interactant>
    <organismsDiffer>false</organismsDiffer>
    <experiments>4</experiments>
</comment>
<comment type="subcellular location">
    <subcellularLocation>
        <location evidence="3">Golgi apparatus</location>
        <location evidence="3">trans-Golgi network membrane</location>
    </subcellularLocation>
    <subcellularLocation>
        <location evidence="3">Membrane</location>
        <topology evidence="3">Peripheral membrane protein</topology>
    </subcellularLocation>
    <text evidence="3">Binds through its PH domain to PtdIns(4)P and ARF1, and subsequently localizes to TGN exit sites.</text>
</comment>
<comment type="domain">
    <text evidence="1">The PH domain of FAPPS binds the small GTPase ARF1 and phosphatidylinositol-4-phosphate (PtdIns4P) with high selectivity, and is required for recruitment of FAPPs to the trans-Golgi network (TGN).</text>
</comment>
<protein>
    <recommendedName>
        <fullName>Pleckstrin homology domain-containing family A member 8</fullName>
        <shortName>PH domain-containing family A member 8</shortName>
    </recommendedName>
    <alternativeName>
        <fullName>Phosphatidylinositol-four-phosphate adapter protein 2</fullName>
        <shortName>FAPP-2</shortName>
        <shortName>Phosphoinositol 4-phosphate adapter protein 2</shortName>
    </alternativeName>
</protein>
<sequence>MEGVLYKWTNYLSGWQPRWFLLCGGILSYYDSPEDAWKGCKGSIQMAVCEIQVHSVDNTRMDLIIPGEQYFYLKARSVAERQRWLVALGSAKACLTDSRTQKEKEFAENTENLKTKMSELRLYCDLLVQQVDKTKEVTTTGVSNSEEGIDVGTLLKSTCNTFLKTLEECMQIANAAFTSELLYRTPPGSPQLAMLKSSKMKHPIIPIHNSLERQMELNSCENGSLHMEINDGEEILMKNKSSLYLKPEIDCSISSEENTDDNITVQGEIMKEEGEDNLGNHDSSLAQPASDSSSSPPESHWEEGQEIIPTFFSTMNTSFSDIELLEDSGIPTEAFLASCYAVVPVLDKLGPTVFAPVKMDLVGNIKKVNQKYITNKEEFTTLQKIVLHEVEADVAQVRNSATEALLWLKRGLKFLKGFLTEVKNGEKDIQTALNNAYGKTLRQHHGWVVRGVFALALRAAPSYEDFVAALTIKEGDHQKAAFSVGMQRDLSLYLPAMEKQLAILDTLYEVHGLESDEVV</sequence>
<keyword id="KW-0333">Golgi apparatus</keyword>
<keyword id="KW-0445">Lipid transport</keyword>
<keyword id="KW-0446">Lipid-binding</keyword>
<keyword id="KW-0472">Membrane</keyword>
<keyword id="KW-0597">Phosphoprotein</keyword>
<keyword id="KW-0653">Protein transport</keyword>
<keyword id="KW-1185">Reference proteome</keyword>
<keyword id="KW-0813">Transport</keyword>
<feature type="chain" id="PRO_0000419607" description="Pleckstrin homology domain-containing family A member 8">
    <location>
        <begin position="1"/>
        <end position="519"/>
    </location>
</feature>
<feature type="domain" description="PH" evidence="4">
    <location>
        <begin position="1"/>
        <end position="93"/>
    </location>
</feature>
<feature type="region of interest" description="Disordered" evidence="5">
    <location>
        <begin position="274"/>
        <end position="302"/>
    </location>
</feature>
<feature type="region of interest" description="Glycolipid transfer protein homology domain">
    <location>
        <begin position="310"/>
        <end position="519"/>
    </location>
</feature>
<feature type="compositionally biased region" description="Low complexity" evidence="5">
    <location>
        <begin position="282"/>
        <end position="298"/>
    </location>
</feature>
<feature type="modified residue" description="Phosphothreonine" evidence="2">
    <location>
        <position position="139"/>
    </location>
</feature>
<feature type="modified residue" description="Phosphoserine" evidence="2">
    <location>
        <position position="145"/>
    </location>
</feature>
<feature type="modified residue" description="Phosphothreonine" evidence="2">
    <location>
        <position position="153"/>
    </location>
</feature>
<feature type="mutagenesis site" description="No binding of PtdIns4P. Very little induction of membrane tubulation." evidence="8">
    <original>R</original>
    <variation>L</variation>
    <location>
        <position position="18"/>
    </location>
</feature>
<feature type="mutagenesis site" description="Abolishes GlcCer binding. No effect on membrane tubulation." evidence="8">
    <original>W</original>
    <variation>A</variation>
    <location>
        <position position="407"/>
    </location>
</feature>
<feature type="sequence conflict" description="In Ref. 1; ACZ98822." evidence="9" ref="1">
    <original>P</original>
    <variation>S</variation>
    <location>
        <position position="296"/>
    </location>
</feature>
<proteinExistence type="evidence at protein level"/>
<dbReference type="EMBL" id="GU204956">
    <property type="protein sequence ID" value="ACZ98822.1"/>
    <property type="molecule type" value="mRNA"/>
</dbReference>
<dbReference type="RefSeq" id="NP_001161170.1">
    <property type="nucleotide sequence ID" value="NM_001167698.1"/>
</dbReference>
<dbReference type="SMR" id="D2KC46"/>
<dbReference type="DIP" id="DIP-49023N"/>
<dbReference type="FunCoup" id="D2KC46">
    <property type="interactions" value="730"/>
</dbReference>
<dbReference type="STRING" id="9615.ENSCAFP00000052497"/>
<dbReference type="PaxDb" id="9612-ENSCAFP00000004558"/>
<dbReference type="Ensembl" id="ENSCAFT00030013452.1">
    <property type="protein sequence ID" value="ENSCAFP00030011750.1"/>
    <property type="gene ID" value="ENSCAFG00030007125.1"/>
</dbReference>
<dbReference type="GeneID" id="482381"/>
<dbReference type="KEGG" id="cfa:482381"/>
<dbReference type="CTD" id="84725"/>
<dbReference type="eggNOG" id="KOG3221">
    <property type="taxonomic scope" value="Eukaryota"/>
</dbReference>
<dbReference type="HOGENOM" id="CLU_039839_0_0_1"/>
<dbReference type="InParanoid" id="D2KC46"/>
<dbReference type="OrthoDB" id="1854502at2759"/>
<dbReference type="Reactome" id="R-CFA-1660499">
    <property type="pathway name" value="Synthesis of PIPs at the plasma membrane"/>
</dbReference>
<dbReference type="Reactome" id="R-CFA-9845576">
    <property type="pathway name" value="Glycosphingolipid transport"/>
</dbReference>
<dbReference type="Proteomes" id="UP000002254">
    <property type="component" value="Unplaced"/>
</dbReference>
<dbReference type="Proteomes" id="UP000694429">
    <property type="component" value="Chromosome 14"/>
</dbReference>
<dbReference type="Proteomes" id="UP000694542">
    <property type="component" value="Unplaced"/>
</dbReference>
<dbReference type="Proteomes" id="UP000805418">
    <property type="component" value="Unplaced"/>
</dbReference>
<dbReference type="Bgee" id="ENSCAFG00000003056">
    <property type="expression patterns" value="Expressed in testis and 46 other cell types or tissues"/>
</dbReference>
<dbReference type="GO" id="GO:0005829">
    <property type="term" value="C:cytosol"/>
    <property type="evidence" value="ECO:0000318"/>
    <property type="project" value="GO_Central"/>
</dbReference>
<dbReference type="GO" id="GO:0016020">
    <property type="term" value="C:membrane"/>
    <property type="evidence" value="ECO:0007669"/>
    <property type="project" value="UniProtKB-SubCell"/>
</dbReference>
<dbReference type="GO" id="GO:0005802">
    <property type="term" value="C:trans-Golgi network"/>
    <property type="evidence" value="ECO:0000250"/>
    <property type="project" value="UniProtKB"/>
</dbReference>
<dbReference type="GO" id="GO:1902387">
    <property type="term" value="F:ceramide 1-phosphate binding"/>
    <property type="evidence" value="ECO:0000318"/>
    <property type="project" value="GO_Central"/>
</dbReference>
<dbReference type="GO" id="GO:1902388">
    <property type="term" value="F:ceramide 1-phosphate transfer activity"/>
    <property type="evidence" value="ECO:0000318"/>
    <property type="project" value="GO_Central"/>
</dbReference>
<dbReference type="GO" id="GO:0097001">
    <property type="term" value="F:ceramide binding"/>
    <property type="evidence" value="ECO:0000250"/>
    <property type="project" value="UniProtKB"/>
</dbReference>
<dbReference type="GO" id="GO:0051861">
    <property type="term" value="F:glycolipid binding"/>
    <property type="evidence" value="ECO:0000250"/>
    <property type="project" value="UniProtKB"/>
</dbReference>
<dbReference type="GO" id="GO:0017089">
    <property type="term" value="F:glycolipid transfer activity"/>
    <property type="evidence" value="ECO:0000250"/>
    <property type="project" value="UniProtKB"/>
</dbReference>
<dbReference type="GO" id="GO:0042802">
    <property type="term" value="F:identical protein binding"/>
    <property type="evidence" value="ECO:0000353"/>
    <property type="project" value="IntAct"/>
</dbReference>
<dbReference type="GO" id="GO:0070273">
    <property type="term" value="F:phosphatidylinositol-4-phosphate binding"/>
    <property type="evidence" value="ECO:0000250"/>
    <property type="project" value="UniProtKB"/>
</dbReference>
<dbReference type="GO" id="GO:0035627">
    <property type="term" value="P:ceramide transport"/>
    <property type="evidence" value="ECO:0000318"/>
    <property type="project" value="GO_Central"/>
</dbReference>
<dbReference type="GO" id="GO:0035621">
    <property type="term" value="P:ER to Golgi ceramide transport"/>
    <property type="evidence" value="ECO:0000250"/>
    <property type="project" value="UniProtKB"/>
</dbReference>
<dbReference type="GO" id="GO:0120009">
    <property type="term" value="P:intermembrane lipid transfer"/>
    <property type="evidence" value="ECO:0000318"/>
    <property type="project" value="GO_Central"/>
</dbReference>
<dbReference type="GO" id="GO:0006869">
    <property type="term" value="P:lipid transport"/>
    <property type="evidence" value="ECO:0000250"/>
    <property type="project" value="UniProtKB"/>
</dbReference>
<dbReference type="GO" id="GO:0015031">
    <property type="term" value="P:protein transport"/>
    <property type="evidence" value="ECO:0007669"/>
    <property type="project" value="UniProtKB-KW"/>
</dbReference>
<dbReference type="CDD" id="cd01247">
    <property type="entry name" value="PH_FAPP1_FAPP2"/>
    <property type="match status" value="1"/>
</dbReference>
<dbReference type="FunFam" id="1.10.3520.10:FF:000001">
    <property type="entry name" value="Pleckstrin domain-containing family A member 8"/>
    <property type="match status" value="1"/>
</dbReference>
<dbReference type="FunFam" id="2.30.29.30:FF:000085">
    <property type="entry name" value="Pleckstrin homology domain-containing family A member 8"/>
    <property type="match status" value="1"/>
</dbReference>
<dbReference type="Gene3D" id="1.10.3520.10">
    <property type="entry name" value="Glycolipid transfer protein"/>
    <property type="match status" value="1"/>
</dbReference>
<dbReference type="Gene3D" id="2.30.29.30">
    <property type="entry name" value="Pleckstrin-homology domain (PH domain)/Phosphotyrosine-binding domain (PTB)"/>
    <property type="match status" value="1"/>
</dbReference>
<dbReference type="InterPro" id="IPR036497">
    <property type="entry name" value="GLTP_sf"/>
</dbReference>
<dbReference type="InterPro" id="IPR014830">
    <property type="entry name" value="Glycolipid_transfer_prot_dom"/>
</dbReference>
<dbReference type="InterPro" id="IPR011993">
    <property type="entry name" value="PH-like_dom_sf"/>
</dbReference>
<dbReference type="InterPro" id="IPR001849">
    <property type="entry name" value="PH_domain"/>
</dbReference>
<dbReference type="PANTHER" id="PTHR10219">
    <property type="entry name" value="GLYCOLIPID TRANSFER PROTEIN-RELATED"/>
    <property type="match status" value="1"/>
</dbReference>
<dbReference type="PANTHER" id="PTHR10219:SF25">
    <property type="entry name" value="PLECKSTRIN HOMOLOGY DOMAIN-CONTAINING FAMILY A MEMBER 8"/>
    <property type="match status" value="1"/>
</dbReference>
<dbReference type="Pfam" id="PF08718">
    <property type="entry name" value="GLTP"/>
    <property type="match status" value="1"/>
</dbReference>
<dbReference type="Pfam" id="PF00169">
    <property type="entry name" value="PH"/>
    <property type="match status" value="1"/>
</dbReference>
<dbReference type="SMART" id="SM00233">
    <property type="entry name" value="PH"/>
    <property type="match status" value="1"/>
</dbReference>
<dbReference type="SUPFAM" id="SSF110004">
    <property type="entry name" value="Glycolipid transfer protein, GLTP"/>
    <property type="match status" value="1"/>
</dbReference>
<dbReference type="SUPFAM" id="SSF50729">
    <property type="entry name" value="PH domain-like"/>
    <property type="match status" value="1"/>
</dbReference>
<dbReference type="PROSITE" id="PS50003">
    <property type="entry name" value="PH_DOMAIN"/>
    <property type="match status" value="1"/>
</dbReference>
<reference key="1">
    <citation type="journal article" date="2009" name="Proc. Natl. Acad. Sci. U.S.A.">
        <title>Golgi protein FAPP2 tubulates membranes.</title>
        <authorList>
            <person name="Cao X."/>
            <person name="Coskun U."/>
            <person name="Rossle M."/>
            <person name="Buschhorn S.B."/>
            <person name="Grzybek M."/>
            <person name="Dafforn T.R."/>
            <person name="Lenoir M."/>
            <person name="Overduin M."/>
            <person name="Simons K."/>
        </authorList>
    </citation>
    <scope>NUCLEOTIDE SEQUENCE [MRNA]</scope>
    <scope>SUBUNIT</scope>
    <scope>FUNCTION</scope>
    <scope>MUTAGENESIS OF ARG-18 AND TRP-407</scope>
</reference>
<reference key="2">
    <citation type="journal article" date="2005" name="Nature">
        <title>Genome sequence, comparative analysis and haplotype structure of the domestic dog.</title>
        <authorList>
            <person name="Lindblad-Toh K."/>
            <person name="Wade C.M."/>
            <person name="Mikkelsen T.S."/>
            <person name="Karlsson E.K."/>
            <person name="Jaffe D.B."/>
            <person name="Kamal M."/>
            <person name="Clamp M."/>
            <person name="Chang J.L."/>
            <person name="Kulbokas E.J. III"/>
            <person name="Zody M.C."/>
            <person name="Mauceli E."/>
            <person name="Xie X."/>
            <person name="Breen M."/>
            <person name="Wayne R.K."/>
            <person name="Ostrander E.A."/>
            <person name="Ponting C.P."/>
            <person name="Galibert F."/>
            <person name="Smith D.R."/>
            <person name="deJong P.J."/>
            <person name="Kirkness E.F."/>
            <person name="Alvarez P."/>
            <person name="Biagi T."/>
            <person name="Brockman W."/>
            <person name="Butler J."/>
            <person name="Chin C.-W."/>
            <person name="Cook A."/>
            <person name="Cuff J."/>
            <person name="Daly M.J."/>
            <person name="DeCaprio D."/>
            <person name="Gnerre S."/>
            <person name="Grabherr M."/>
            <person name="Kellis M."/>
            <person name="Kleber M."/>
            <person name="Bardeleben C."/>
            <person name="Goodstadt L."/>
            <person name="Heger A."/>
            <person name="Hitte C."/>
            <person name="Kim L."/>
            <person name="Koepfli K.-P."/>
            <person name="Parker H.G."/>
            <person name="Pollinger J.P."/>
            <person name="Searle S.M.J."/>
            <person name="Sutter N.B."/>
            <person name="Thomas R."/>
            <person name="Webber C."/>
            <person name="Baldwin J."/>
            <person name="Abebe A."/>
            <person name="Abouelleil A."/>
            <person name="Aftuck L."/>
            <person name="Ait-Zahra M."/>
            <person name="Aldredge T."/>
            <person name="Allen N."/>
            <person name="An P."/>
            <person name="Anderson S."/>
            <person name="Antoine C."/>
            <person name="Arachchi H."/>
            <person name="Aslam A."/>
            <person name="Ayotte L."/>
            <person name="Bachantsang P."/>
            <person name="Barry A."/>
            <person name="Bayul T."/>
            <person name="Benamara M."/>
            <person name="Berlin A."/>
            <person name="Bessette D."/>
            <person name="Blitshteyn B."/>
            <person name="Bloom T."/>
            <person name="Blye J."/>
            <person name="Boguslavskiy L."/>
            <person name="Bonnet C."/>
            <person name="Boukhgalter B."/>
            <person name="Brown A."/>
            <person name="Cahill P."/>
            <person name="Calixte N."/>
            <person name="Camarata J."/>
            <person name="Cheshatsang Y."/>
            <person name="Chu J."/>
            <person name="Citroen M."/>
            <person name="Collymore A."/>
            <person name="Cooke P."/>
            <person name="Dawoe T."/>
            <person name="Daza R."/>
            <person name="Decktor K."/>
            <person name="DeGray S."/>
            <person name="Dhargay N."/>
            <person name="Dooley K."/>
            <person name="Dooley K."/>
            <person name="Dorje P."/>
            <person name="Dorjee K."/>
            <person name="Dorris L."/>
            <person name="Duffey N."/>
            <person name="Dupes A."/>
            <person name="Egbiremolen O."/>
            <person name="Elong R."/>
            <person name="Falk J."/>
            <person name="Farina A."/>
            <person name="Faro S."/>
            <person name="Ferguson D."/>
            <person name="Ferreira P."/>
            <person name="Fisher S."/>
            <person name="FitzGerald M."/>
            <person name="Foley K."/>
            <person name="Foley C."/>
            <person name="Franke A."/>
            <person name="Friedrich D."/>
            <person name="Gage D."/>
            <person name="Garber M."/>
            <person name="Gearin G."/>
            <person name="Giannoukos G."/>
            <person name="Goode T."/>
            <person name="Goyette A."/>
            <person name="Graham J."/>
            <person name="Grandbois E."/>
            <person name="Gyaltsen K."/>
            <person name="Hafez N."/>
            <person name="Hagopian D."/>
            <person name="Hagos B."/>
            <person name="Hall J."/>
            <person name="Healy C."/>
            <person name="Hegarty R."/>
            <person name="Honan T."/>
            <person name="Horn A."/>
            <person name="Houde N."/>
            <person name="Hughes L."/>
            <person name="Hunnicutt L."/>
            <person name="Husby M."/>
            <person name="Jester B."/>
            <person name="Jones C."/>
            <person name="Kamat A."/>
            <person name="Kanga B."/>
            <person name="Kells C."/>
            <person name="Khazanovich D."/>
            <person name="Kieu A.C."/>
            <person name="Kisner P."/>
            <person name="Kumar M."/>
            <person name="Lance K."/>
            <person name="Landers T."/>
            <person name="Lara M."/>
            <person name="Lee W."/>
            <person name="Leger J.-P."/>
            <person name="Lennon N."/>
            <person name="Leuper L."/>
            <person name="LeVine S."/>
            <person name="Liu J."/>
            <person name="Liu X."/>
            <person name="Lokyitsang Y."/>
            <person name="Lokyitsang T."/>
            <person name="Lui A."/>
            <person name="Macdonald J."/>
            <person name="Major J."/>
            <person name="Marabella R."/>
            <person name="Maru K."/>
            <person name="Matthews C."/>
            <person name="McDonough S."/>
            <person name="Mehta T."/>
            <person name="Meldrim J."/>
            <person name="Melnikov A."/>
            <person name="Meneus L."/>
            <person name="Mihalev A."/>
            <person name="Mihova T."/>
            <person name="Miller K."/>
            <person name="Mittelman R."/>
            <person name="Mlenga V."/>
            <person name="Mulrain L."/>
            <person name="Munson G."/>
            <person name="Navidi A."/>
            <person name="Naylor J."/>
            <person name="Nguyen T."/>
            <person name="Nguyen N."/>
            <person name="Nguyen C."/>
            <person name="Nguyen T."/>
            <person name="Nicol R."/>
            <person name="Norbu N."/>
            <person name="Norbu C."/>
            <person name="Novod N."/>
            <person name="Nyima T."/>
            <person name="Olandt P."/>
            <person name="O'Neill B."/>
            <person name="O'Neill K."/>
            <person name="Osman S."/>
            <person name="Oyono L."/>
            <person name="Patti C."/>
            <person name="Perrin D."/>
            <person name="Phunkhang P."/>
            <person name="Pierre F."/>
            <person name="Priest M."/>
            <person name="Rachupka A."/>
            <person name="Raghuraman S."/>
            <person name="Rameau R."/>
            <person name="Ray V."/>
            <person name="Raymond C."/>
            <person name="Rege F."/>
            <person name="Rise C."/>
            <person name="Rogers J."/>
            <person name="Rogov P."/>
            <person name="Sahalie J."/>
            <person name="Settipalli S."/>
            <person name="Sharpe T."/>
            <person name="Shea T."/>
            <person name="Sheehan M."/>
            <person name="Sherpa N."/>
            <person name="Shi J."/>
            <person name="Shih D."/>
            <person name="Sloan J."/>
            <person name="Smith C."/>
            <person name="Sparrow T."/>
            <person name="Stalker J."/>
            <person name="Stange-Thomann N."/>
            <person name="Stavropoulos S."/>
            <person name="Stone C."/>
            <person name="Stone S."/>
            <person name="Sykes S."/>
            <person name="Tchuinga P."/>
            <person name="Tenzing P."/>
            <person name="Tesfaye S."/>
            <person name="Thoulutsang D."/>
            <person name="Thoulutsang Y."/>
            <person name="Topham K."/>
            <person name="Topping I."/>
            <person name="Tsamla T."/>
            <person name="Vassiliev H."/>
            <person name="Venkataraman V."/>
            <person name="Vo A."/>
            <person name="Wangchuk T."/>
            <person name="Wangdi T."/>
            <person name="Weiand M."/>
            <person name="Wilkinson J."/>
            <person name="Wilson A."/>
            <person name="Yadav S."/>
            <person name="Yang S."/>
            <person name="Yang X."/>
            <person name="Young G."/>
            <person name="Yu Q."/>
            <person name="Zainoun J."/>
            <person name="Zembek L."/>
            <person name="Zimmer A."/>
            <person name="Lander E.S."/>
        </authorList>
    </citation>
    <scope>NUCLEOTIDE SEQUENCE [LARGE SCALE GENOMIC DNA]</scope>
    <source>
        <strain>Boxer</strain>
    </source>
</reference>
<reference key="3">
    <citation type="journal article" date="2005" name="J. Cell Biol.">
        <title>FAPP2 is involved in the transport of apical cargo in polarized MDCK cells.</title>
        <authorList>
            <person name="Vieira O.V."/>
            <person name="Verkade P."/>
            <person name="Manninen A."/>
            <person name="Simons K."/>
        </authorList>
    </citation>
    <scope>FUNCTION</scope>
    <scope>SUBCELLULAR LOCATION</scope>
    <scope>PHOSPHOLIPID-BINDING</scope>
</reference>
<reference key="4">
    <citation type="journal article" date="2009" name="Am. J. Physiol.">
        <title>FAPP2 is required for aquaporin-2 apical sorting at trans-Golgi network in polarized MDCK cells.</title>
        <authorList>
            <person name="Yui N."/>
            <person name="Okutsu R."/>
            <person name="Sohara E."/>
            <person name="Rai T."/>
            <person name="Ohta A."/>
            <person name="Noda Y."/>
            <person name="Sasaki S."/>
            <person name="Uchida S."/>
        </authorList>
    </citation>
    <scope>FUNCTION</scope>
    <scope>SUBCELLULAR LOCATION</scope>
</reference>
<accession>D2KC46</accession>
<accession>E2R9N6</accession>